<keyword id="KW-0030">Aminoacyl-tRNA synthetase</keyword>
<keyword id="KW-0067">ATP-binding</keyword>
<keyword id="KW-0963">Cytoplasm</keyword>
<keyword id="KW-0436">Ligase</keyword>
<keyword id="KW-0547">Nucleotide-binding</keyword>
<keyword id="KW-0648">Protein biosynthesis</keyword>
<dbReference type="EC" id="6.1.1.14" evidence="1"/>
<dbReference type="EMBL" id="CP000036">
    <property type="protein sequence ID" value="ABB68046.1"/>
    <property type="molecule type" value="Genomic_DNA"/>
</dbReference>
<dbReference type="RefSeq" id="WP_001291815.1">
    <property type="nucleotide sequence ID" value="NC_007613.1"/>
</dbReference>
<dbReference type="SMR" id="Q31V62"/>
<dbReference type="KEGG" id="sbo:SBO_3564"/>
<dbReference type="HOGENOM" id="CLU_007220_2_2_6"/>
<dbReference type="Proteomes" id="UP000007067">
    <property type="component" value="Chromosome"/>
</dbReference>
<dbReference type="GO" id="GO:0005829">
    <property type="term" value="C:cytosol"/>
    <property type="evidence" value="ECO:0007669"/>
    <property type="project" value="TreeGrafter"/>
</dbReference>
<dbReference type="GO" id="GO:0004814">
    <property type="term" value="F:arginine-tRNA ligase activity"/>
    <property type="evidence" value="ECO:0007669"/>
    <property type="project" value="InterPro"/>
</dbReference>
<dbReference type="GO" id="GO:0005524">
    <property type="term" value="F:ATP binding"/>
    <property type="evidence" value="ECO:0007669"/>
    <property type="project" value="UniProtKB-UniRule"/>
</dbReference>
<dbReference type="GO" id="GO:0004820">
    <property type="term" value="F:glycine-tRNA ligase activity"/>
    <property type="evidence" value="ECO:0007669"/>
    <property type="project" value="UniProtKB-UniRule"/>
</dbReference>
<dbReference type="GO" id="GO:0006420">
    <property type="term" value="P:arginyl-tRNA aminoacylation"/>
    <property type="evidence" value="ECO:0007669"/>
    <property type="project" value="InterPro"/>
</dbReference>
<dbReference type="GO" id="GO:0006426">
    <property type="term" value="P:glycyl-tRNA aminoacylation"/>
    <property type="evidence" value="ECO:0007669"/>
    <property type="project" value="UniProtKB-UniRule"/>
</dbReference>
<dbReference type="HAMAP" id="MF_00255">
    <property type="entry name" value="Gly_tRNA_synth_beta"/>
    <property type="match status" value="1"/>
</dbReference>
<dbReference type="InterPro" id="IPR008909">
    <property type="entry name" value="DALR_anticod-bd"/>
</dbReference>
<dbReference type="InterPro" id="IPR015944">
    <property type="entry name" value="Gly-tRNA-synth_bsu"/>
</dbReference>
<dbReference type="InterPro" id="IPR006194">
    <property type="entry name" value="Gly-tRNA-synth_heterodimer"/>
</dbReference>
<dbReference type="NCBIfam" id="TIGR00211">
    <property type="entry name" value="glyS"/>
    <property type="match status" value="1"/>
</dbReference>
<dbReference type="PANTHER" id="PTHR30075:SF2">
    <property type="entry name" value="GLYCINE--TRNA LIGASE, CHLOROPLASTIC_MITOCHONDRIAL 2"/>
    <property type="match status" value="1"/>
</dbReference>
<dbReference type="PANTHER" id="PTHR30075">
    <property type="entry name" value="GLYCYL-TRNA SYNTHETASE"/>
    <property type="match status" value="1"/>
</dbReference>
<dbReference type="Pfam" id="PF05746">
    <property type="entry name" value="DALR_1"/>
    <property type="match status" value="1"/>
</dbReference>
<dbReference type="Pfam" id="PF02092">
    <property type="entry name" value="tRNA_synt_2f"/>
    <property type="match status" value="1"/>
</dbReference>
<dbReference type="PRINTS" id="PR01045">
    <property type="entry name" value="TRNASYNTHGB"/>
</dbReference>
<dbReference type="SUPFAM" id="SSF109604">
    <property type="entry name" value="HD-domain/PDEase-like"/>
    <property type="match status" value="1"/>
</dbReference>
<dbReference type="PROSITE" id="PS50861">
    <property type="entry name" value="AA_TRNA_LIGASE_II_GLYAB"/>
    <property type="match status" value="1"/>
</dbReference>
<name>SYGB_SHIBS</name>
<reference key="1">
    <citation type="journal article" date="2005" name="Nucleic Acids Res.">
        <title>Genome dynamics and diversity of Shigella species, the etiologic agents of bacillary dysentery.</title>
        <authorList>
            <person name="Yang F."/>
            <person name="Yang J."/>
            <person name="Zhang X."/>
            <person name="Chen L."/>
            <person name="Jiang Y."/>
            <person name="Yan Y."/>
            <person name="Tang X."/>
            <person name="Wang J."/>
            <person name="Xiong Z."/>
            <person name="Dong J."/>
            <person name="Xue Y."/>
            <person name="Zhu Y."/>
            <person name="Xu X."/>
            <person name="Sun L."/>
            <person name="Chen S."/>
            <person name="Nie H."/>
            <person name="Peng J."/>
            <person name="Xu J."/>
            <person name="Wang Y."/>
            <person name="Yuan Z."/>
            <person name="Wen Y."/>
            <person name="Yao Z."/>
            <person name="Shen Y."/>
            <person name="Qiang B."/>
            <person name="Hou Y."/>
            <person name="Yu J."/>
            <person name="Jin Q."/>
        </authorList>
    </citation>
    <scope>NUCLEOTIDE SEQUENCE [LARGE SCALE GENOMIC DNA]</scope>
    <source>
        <strain>Sb227</strain>
    </source>
</reference>
<comment type="catalytic activity">
    <reaction evidence="1">
        <text>tRNA(Gly) + glycine + ATP = glycyl-tRNA(Gly) + AMP + diphosphate</text>
        <dbReference type="Rhea" id="RHEA:16013"/>
        <dbReference type="Rhea" id="RHEA-COMP:9664"/>
        <dbReference type="Rhea" id="RHEA-COMP:9683"/>
        <dbReference type="ChEBI" id="CHEBI:30616"/>
        <dbReference type="ChEBI" id="CHEBI:33019"/>
        <dbReference type="ChEBI" id="CHEBI:57305"/>
        <dbReference type="ChEBI" id="CHEBI:78442"/>
        <dbReference type="ChEBI" id="CHEBI:78522"/>
        <dbReference type="ChEBI" id="CHEBI:456215"/>
        <dbReference type="EC" id="6.1.1.14"/>
    </reaction>
</comment>
<comment type="subunit">
    <text evidence="1">Tetramer of two alpha and two beta subunits.</text>
</comment>
<comment type="subcellular location">
    <subcellularLocation>
        <location evidence="1">Cytoplasm</location>
    </subcellularLocation>
</comment>
<comment type="similarity">
    <text evidence="1">Belongs to the class-II aminoacyl-tRNA synthetase family.</text>
</comment>
<feature type="chain" id="PRO_1000006411" description="Glycine--tRNA ligase beta subunit">
    <location>
        <begin position="1"/>
        <end position="689"/>
    </location>
</feature>
<protein>
    <recommendedName>
        <fullName evidence="1">Glycine--tRNA ligase beta subunit</fullName>
        <ecNumber evidence="1">6.1.1.14</ecNumber>
    </recommendedName>
    <alternativeName>
        <fullName evidence="1">Glycyl-tRNA synthetase beta subunit</fullName>
        <shortName evidence="1">GlyRS</shortName>
    </alternativeName>
</protein>
<organism>
    <name type="scientific">Shigella boydii serotype 4 (strain Sb227)</name>
    <dbReference type="NCBI Taxonomy" id="300268"/>
    <lineage>
        <taxon>Bacteria</taxon>
        <taxon>Pseudomonadati</taxon>
        <taxon>Pseudomonadota</taxon>
        <taxon>Gammaproteobacteria</taxon>
        <taxon>Enterobacterales</taxon>
        <taxon>Enterobacteriaceae</taxon>
        <taxon>Shigella</taxon>
    </lineage>
</organism>
<proteinExistence type="inferred from homology"/>
<gene>
    <name evidence="1" type="primary">glyS</name>
    <name type="ordered locus">SBO_3564</name>
</gene>
<evidence type="ECO:0000255" key="1">
    <source>
        <dbReference type="HAMAP-Rule" id="MF_00255"/>
    </source>
</evidence>
<sequence length="689" mass="76786">MSEKTFLVEIGTEELPPKALRSLVESFAANFTVELDNAGLAHGTVQWFAAPRRLALKVANLAEAQPDREIEKRGPAIAQAFDAEGKPSKAAEGWARGCGITVDQAERLTTDKGEWLLYRAHVKGESTEALLPNMVATSLAKLPIPKLMRWGASDVHFVRPVHTVTLLLGDKVIPATILGIQSDRVIRGHRFMGEPEFTIDNADQYPEILRERGKVIADYEERKAKIKADAEEAARKIGGNADLSESLLEEVASLVEWPVVLTAKFEEKFLAVPAEALVYTMKGDQKYFPVYANDGKLLPNFIFVANIESKDPQQIISGNEKVVRPRLADAEFFFNTDRKKRLEDNLPRLQTVLFQQQLGTLRDKTDRIQALAGWIAEQIGADVNHATRAGLLSKCDLMTNMVFEFTDTQGVMGMHYACHDGEAEDVAVALNEQYQPRFAGDDLPSNPVACALAIADKMDTLAGIFGIGQHPKGDKDPFALRRAALGVLRIIVEKNLNLDLQTLTEEAVRLYGDKLTNANVVDDVIDFMLGRFRAWYQDEGYTVDTIQAVLARRPTRPADFDARMKAVSHFRTLDAAAALAAANKRVSNILAKSDEVLSDRVNASTLKEPEEIKLAMQVVVLRDKLEPYFAEGRYQDALVELAELREPVDAFFDKVMVMVDDKELRLNRLTMLEKLRELFLRVADISLLQ</sequence>
<accession>Q31V62</accession>